<keyword id="KW-0285">Flavoprotein</keyword>
<keyword id="KW-0288">FMN</keyword>
<keyword id="KW-0520">NAD</keyword>
<keyword id="KW-0560">Oxidoreductase</keyword>
<keyword id="KW-1185">Reference proteome</keyword>
<proteinExistence type="inferred from homology"/>
<gene>
    <name evidence="1" type="primary">azoR2</name>
    <name type="ordered locus">CPE0791</name>
</gene>
<protein>
    <recommendedName>
        <fullName evidence="1">FMN-dependent NADH:quinone oxidoreductase 2</fullName>
        <ecNumber evidence="1">1.6.5.-</ecNumber>
    </recommendedName>
    <alternativeName>
        <fullName evidence="1">Azo-dye reductase 2</fullName>
    </alternativeName>
    <alternativeName>
        <fullName evidence="1">FMN-dependent NADH-azo compound oxidoreductase 2</fullName>
    </alternativeName>
    <alternativeName>
        <fullName evidence="1">FMN-dependent NADH-azoreductase 2</fullName>
        <ecNumber evidence="1">1.7.1.17</ecNumber>
    </alternativeName>
</protein>
<evidence type="ECO:0000255" key="1">
    <source>
        <dbReference type="HAMAP-Rule" id="MF_01216"/>
    </source>
</evidence>
<sequence length="198" mass="22384">MSKVLYVKANIKNEGESRTFKVSDSFVEEYKKNNPEDEIITLDLYKENIDFLRVDDLGKLFGTKDEESKNNSILKYAYQFADADKYIIAAPMWNISFPAILKAYIDYVSVSGITFKYTAEGPVGLLNNKKAVHIVSRGGGYDNSPYEMGDRYLRTILGFFGIKDIETIAIDNLDVMGVNVKEKVEEGIEKAISLAKKF</sequence>
<accession>Q8XM99</accession>
<dbReference type="EC" id="1.6.5.-" evidence="1"/>
<dbReference type="EC" id="1.7.1.17" evidence="1"/>
<dbReference type="EMBL" id="BA000016">
    <property type="protein sequence ID" value="BAB80497.1"/>
    <property type="molecule type" value="Genomic_DNA"/>
</dbReference>
<dbReference type="RefSeq" id="WP_011010033.1">
    <property type="nucleotide sequence ID" value="NC_003366.1"/>
</dbReference>
<dbReference type="SMR" id="Q8XM99"/>
<dbReference type="STRING" id="195102.gene:10490053"/>
<dbReference type="KEGG" id="cpe:CPE0791"/>
<dbReference type="HOGENOM" id="CLU_088964_3_1_9"/>
<dbReference type="Proteomes" id="UP000000818">
    <property type="component" value="Chromosome"/>
</dbReference>
<dbReference type="GO" id="GO:0009055">
    <property type="term" value="F:electron transfer activity"/>
    <property type="evidence" value="ECO:0007669"/>
    <property type="project" value="UniProtKB-UniRule"/>
</dbReference>
<dbReference type="GO" id="GO:0010181">
    <property type="term" value="F:FMN binding"/>
    <property type="evidence" value="ECO:0007669"/>
    <property type="project" value="UniProtKB-UniRule"/>
</dbReference>
<dbReference type="GO" id="GO:0016652">
    <property type="term" value="F:oxidoreductase activity, acting on NAD(P)H as acceptor"/>
    <property type="evidence" value="ECO:0007669"/>
    <property type="project" value="UniProtKB-UniRule"/>
</dbReference>
<dbReference type="GO" id="GO:0016655">
    <property type="term" value="F:oxidoreductase activity, acting on NAD(P)H, quinone or similar compound as acceptor"/>
    <property type="evidence" value="ECO:0007669"/>
    <property type="project" value="InterPro"/>
</dbReference>
<dbReference type="Gene3D" id="3.40.50.360">
    <property type="match status" value="1"/>
</dbReference>
<dbReference type="HAMAP" id="MF_01216">
    <property type="entry name" value="Azoreductase_type1"/>
    <property type="match status" value="1"/>
</dbReference>
<dbReference type="InterPro" id="IPR003680">
    <property type="entry name" value="Flavodoxin_fold"/>
</dbReference>
<dbReference type="InterPro" id="IPR029039">
    <property type="entry name" value="Flavoprotein-like_sf"/>
</dbReference>
<dbReference type="InterPro" id="IPR050104">
    <property type="entry name" value="FMN-dep_NADH:Q_OxRdtase_AzoR1"/>
</dbReference>
<dbReference type="InterPro" id="IPR023048">
    <property type="entry name" value="NADH:quinone_OxRdtase_FMN_depd"/>
</dbReference>
<dbReference type="PANTHER" id="PTHR43741">
    <property type="entry name" value="FMN-DEPENDENT NADH-AZOREDUCTASE 1"/>
    <property type="match status" value="1"/>
</dbReference>
<dbReference type="PANTHER" id="PTHR43741:SF7">
    <property type="entry name" value="FMN-DEPENDENT NADH:QUINONE OXIDOREDUCTASE"/>
    <property type="match status" value="1"/>
</dbReference>
<dbReference type="Pfam" id="PF02525">
    <property type="entry name" value="Flavodoxin_2"/>
    <property type="match status" value="1"/>
</dbReference>
<dbReference type="SUPFAM" id="SSF52218">
    <property type="entry name" value="Flavoproteins"/>
    <property type="match status" value="1"/>
</dbReference>
<reference key="1">
    <citation type="journal article" date="2002" name="Proc. Natl. Acad. Sci. U.S.A.">
        <title>Complete genome sequence of Clostridium perfringens, an anaerobic flesh-eater.</title>
        <authorList>
            <person name="Shimizu T."/>
            <person name="Ohtani K."/>
            <person name="Hirakawa H."/>
            <person name="Ohshima K."/>
            <person name="Yamashita A."/>
            <person name="Shiba T."/>
            <person name="Ogasawara N."/>
            <person name="Hattori M."/>
            <person name="Kuhara S."/>
            <person name="Hayashi H."/>
        </authorList>
    </citation>
    <scope>NUCLEOTIDE SEQUENCE [LARGE SCALE GENOMIC DNA]</scope>
    <source>
        <strain>13 / Type A</strain>
    </source>
</reference>
<comment type="function">
    <text evidence="1">Quinone reductase that provides resistance to thiol-specific stress caused by electrophilic quinones.</text>
</comment>
<comment type="function">
    <text evidence="1">Also exhibits azoreductase activity. Catalyzes the reductive cleavage of the azo bond in aromatic azo compounds to the corresponding amines.</text>
</comment>
<comment type="catalytic activity">
    <reaction evidence="1">
        <text>2 a quinone + NADH + H(+) = 2 a 1,4-benzosemiquinone + NAD(+)</text>
        <dbReference type="Rhea" id="RHEA:65952"/>
        <dbReference type="ChEBI" id="CHEBI:15378"/>
        <dbReference type="ChEBI" id="CHEBI:57540"/>
        <dbReference type="ChEBI" id="CHEBI:57945"/>
        <dbReference type="ChEBI" id="CHEBI:132124"/>
        <dbReference type="ChEBI" id="CHEBI:134225"/>
    </reaction>
</comment>
<comment type="catalytic activity">
    <reaction evidence="1">
        <text>N,N-dimethyl-1,4-phenylenediamine + anthranilate + 2 NAD(+) = 2-(4-dimethylaminophenyl)diazenylbenzoate + 2 NADH + 2 H(+)</text>
        <dbReference type="Rhea" id="RHEA:55872"/>
        <dbReference type="ChEBI" id="CHEBI:15378"/>
        <dbReference type="ChEBI" id="CHEBI:15783"/>
        <dbReference type="ChEBI" id="CHEBI:16567"/>
        <dbReference type="ChEBI" id="CHEBI:57540"/>
        <dbReference type="ChEBI" id="CHEBI:57945"/>
        <dbReference type="ChEBI" id="CHEBI:71579"/>
        <dbReference type="EC" id="1.7.1.17"/>
    </reaction>
</comment>
<comment type="cofactor">
    <cofactor evidence="1">
        <name>FMN</name>
        <dbReference type="ChEBI" id="CHEBI:58210"/>
    </cofactor>
    <text evidence="1">Binds 1 FMN per subunit.</text>
</comment>
<comment type="subunit">
    <text evidence="1">Homodimer.</text>
</comment>
<comment type="similarity">
    <text evidence="1">Belongs to the azoreductase type 1 family.</text>
</comment>
<organism>
    <name type="scientific">Clostridium perfringens (strain 13 / Type A)</name>
    <dbReference type="NCBI Taxonomy" id="195102"/>
    <lineage>
        <taxon>Bacteria</taxon>
        <taxon>Bacillati</taxon>
        <taxon>Bacillota</taxon>
        <taxon>Clostridia</taxon>
        <taxon>Eubacteriales</taxon>
        <taxon>Clostridiaceae</taxon>
        <taxon>Clostridium</taxon>
    </lineage>
</organism>
<feature type="chain" id="PRO_0000166334" description="FMN-dependent NADH:quinone oxidoreductase 2">
    <location>
        <begin position="1"/>
        <end position="198"/>
    </location>
</feature>
<feature type="binding site" evidence="1">
    <location>
        <begin position="136"/>
        <end position="139"/>
    </location>
    <ligand>
        <name>FMN</name>
        <dbReference type="ChEBI" id="CHEBI:58210"/>
    </ligand>
</feature>
<name>AZOR2_CLOPE</name>